<comment type="function">
    <text evidence="1">Catalyzes the NADPH-dependent reduction of glutamyl-tRNA(Glu) to glutamate 1-semialdehyde (GSA).</text>
</comment>
<comment type="catalytic activity">
    <reaction evidence="1">
        <text>(S)-4-amino-5-oxopentanoate + tRNA(Glu) + NADP(+) = L-glutamyl-tRNA(Glu) + NADPH + H(+)</text>
        <dbReference type="Rhea" id="RHEA:12344"/>
        <dbReference type="Rhea" id="RHEA-COMP:9663"/>
        <dbReference type="Rhea" id="RHEA-COMP:9680"/>
        <dbReference type="ChEBI" id="CHEBI:15378"/>
        <dbReference type="ChEBI" id="CHEBI:57501"/>
        <dbReference type="ChEBI" id="CHEBI:57783"/>
        <dbReference type="ChEBI" id="CHEBI:58349"/>
        <dbReference type="ChEBI" id="CHEBI:78442"/>
        <dbReference type="ChEBI" id="CHEBI:78520"/>
        <dbReference type="EC" id="1.2.1.70"/>
    </reaction>
</comment>
<comment type="pathway">
    <text evidence="1">Porphyrin-containing compound metabolism; protoporphyrin-IX biosynthesis; 5-aminolevulinate from L-glutamyl-tRNA(Glu): step 1/2.</text>
</comment>
<comment type="subunit">
    <text evidence="1">Homodimer.</text>
</comment>
<comment type="domain">
    <text evidence="1">Possesses an unusual extended V-shaped dimeric structure with each monomer consisting of three distinct domains arranged along a curved 'spinal' alpha-helix. The N-terminal catalytic domain specifically recognizes the glutamate moiety of the substrate. The second domain is the NADPH-binding domain, and the third C-terminal domain is responsible for dimerization.</text>
</comment>
<comment type="miscellaneous">
    <text evidence="1">During catalysis, the active site Cys acts as a nucleophile attacking the alpha-carbonyl group of tRNA-bound glutamate with the formation of a thioester intermediate between enzyme and glutamate, and the concomitant release of tRNA(Glu). The thioester intermediate is finally reduced by direct hydride transfer from NADPH, to form the product GSA.</text>
</comment>
<comment type="similarity">
    <text evidence="1">Belongs to the glutamyl-tRNA reductase family.</text>
</comment>
<feature type="chain" id="PRO_1000004634" description="Glutamyl-tRNA reductase">
    <location>
        <begin position="1"/>
        <end position="429"/>
    </location>
</feature>
<feature type="active site" description="Nucleophile" evidence="1">
    <location>
        <position position="50"/>
    </location>
</feature>
<feature type="binding site" evidence="1">
    <location>
        <begin position="49"/>
        <end position="52"/>
    </location>
    <ligand>
        <name>substrate</name>
    </ligand>
</feature>
<feature type="binding site" evidence="1">
    <location>
        <position position="107"/>
    </location>
    <ligand>
        <name>substrate</name>
    </ligand>
</feature>
<feature type="binding site" evidence="1">
    <location>
        <begin position="112"/>
        <end position="114"/>
    </location>
    <ligand>
        <name>substrate</name>
    </ligand>
</feature>
<feature type="binding site" evidence="1">
    <location>
        <position position="118"/>
    </location>
    <ligand>
        <name>substrate</name>
    </ligand>
</feature>
<feature type="binding site" evidence="1">
    <location>
        <begin position="187"/>
        <end position="192"/>
    </location>
    <ligand>
        <name>NADP(+)</name>
        <dbReference type="ChEBI" id="CHEBI:58349"/>
    </ligand>
</feature>
<feature type="site" description="Important for activity" evidence="1">
    <location>
        <position position="97"/>
    </location>
</feature>
<dbReference type="EC" id="1.2.1.70" evidence="1"/>
<dbReference type="EMBL" id="CP000514">
    <property type="protein sequence ID" value="ABM19437.1"/>
    <property type="molecule type" value="Genomic_DNA"/>
</dbReference>
<dbReference type="RefSeq" id="WP_011785824.1">
    <property type="nucleotide sequence ID" value="NC_008740.1"/>
</dbReference>
<dbReference type="SMR" id="A1U368"/>
<dbReference type="STRING" id="351348.Maqu_2361"/>
<dbReference type="KEGG" id="maq:Maqu_2361"/>
<dbReference type="eggNOG" id="COG0373">
    <property type="taxonomic scope" value="Bacteria"/>
</dbReference>
<dbReference type="HOGENOM" id="CLU_035113_2_2_6"/>
<dbReference type="OrthoDB" id="110209at2"/>
<dbReference type="UniPathway" id="UPA00251">
    <property type="reaction ID" value="UER00316"/>
</dbReference>
<dbReference type="Proteomes" id="UP000000998">
    <property type="component" value="Chromosome"/>
</dbReference>
<dbReference type="GO" id="GO:0008883">
    <property type="term" value="F:glutamyl-tRNA reductase activity"/>
    <property type="evidence" value="ECO:0007669"/>
    <property type="project" value="UniProtKB-UniRule"/>
</dbReference>
<dbReference type="GO" id="GO:0050661">
    <property type="term" value="F:NADP binding"/>
    <property type="evidence" value="ECO:0007669"/>
    <property type="project" value="InterPro"/>
</dbReference>
<dbReference type="GO" id="GO:0019353">
    <property type="term" value="P:protoporphyrinogen IX biosynthetic process from glutamate"/>
    <property type="evidence" value="ECO:0007669"/>
    <property type="project" value="TreeGrafter"/>
</dbReference>
<dbReference type="CDD" id="cd05213">
    <property type="entry name" value="NAD_bind_Glutamyl_tRNA_reduct"/>
    <property type="match status" value="1"/>
</dbReference>
<dbReference type="FunFam" id="3.30.460.30:FF:000001">
    <property type="entry name" value="Glutamyl-tRNA reductase"/>
    <property type="match status" value="1"/>
</dbReference>
<dbReference type="FunFam" id="3.40.50.720:FF:000031">
    <property type="entry name" value="Glutamyl-tRNA reductase"/>
    <property type="match status" value="1"/>
</dbReference>
<dbReference type="Gene3D" id="3.30.460.30">
    <property type="entry name" value="Glutamyl-tRNA reductase, N-terminal domain"/>
    <property type="match status" value="1"/>
</dbReference>
<dbReference type="Gene3D" id="3.40.50.720">
    <property type="entry name" value="NAD(P)-binding Rossmann-like Domain"/>
    <property type="match status" value="1"/>
</dbReference>
<dbReference type="HAMAP" id="MF_00087">
    <property type="entry name" value="Glu_tRNA_reductase"/>
    <property type="match status" value="1"/>
</dbReference>
<dbReference type="InterPro" id="IPR000343">
    <property type="entry name" value="4pyrrol_synth_GluRdtase"/>
</dbReference>
<dbReference type="InterPro" id="IPR015896">
    <property type="entry name" value="4pyrrol_synth_GluRdtase_dimer"/>
</dbReference>
<dbReference type="InterPro" id="IPR015895">
    <property type="entry name" value="4pyrrol_synth_GluRdtase_N"/>
</dbReference>
<dbReference type="InterPro" id="IPR018214">
    <property type="entry name" value="GluRdtase_CS"/>
</dbReference>
<dbReference type="InterPro" id="IPR036453">
    <property type="entry name" value="GluRdtase_dimer_dom_sf"/>
</dbReference>
<dbReference type="InterPro" id="IPR036343">
    <property type="entry name" value="GluRdtase_N_sf"/>
</dbReference>
<dbReference type="InterPro" id="IPR036291">
    <property type="entry name" value="NAD(P)-bd_dom_sf"/>
</dbReference>
<dbReference type="InterPro" id="IPR006151">
    <property type="entry name" value="Shikm_DH/Glu-tRNA_Rdtase"/>
</dbReference>
<dbReference type="NCBIfam" id="TIGR01035">
    <property type="entry name" value="hemA"/>
    <property type="match status" value="1"/>
</dbReference>
<dbReference type="PANTHER" id="PTHR43013">
    <property type="entry name" value="GLUTAMYL-TRNA REDUCTASE"/>
    <property type="match status" value="1"/>
</dbReference>
<dbReference type="PANTHER" id="PTHR43013:SF1">
    <property type="entry name" value="GLUTAMYL-TRNA REDUCTASE"/>
    <property type="match status" value="1"/>
</dbReference>
<dbReference type="Pfam" id="PF00745">
    <property type="entry name" value="GlutR_dimer"/>
    <property type="match status" value="1"/>
</dbReference>
<dbReference type="Pfam" id="PF05201">
    <property type="entry name" value="GlutR_N"/>
    <property type="match status" value="1"/>
</dbReference>
<dbReference type="Pfam" id="PF01488">
    <property type="entry name" value="Shikimate_DH"/>
    <property type="match status" value="1"/>
</dbReference>
<dbReference type="PIRSF" id="PIRSF000445">
    <property type="entry name" value="4pyrrol_synth_GluRdtase"/>
    <property type="match status" value="1"/>
</dbReference>
<dbReference type="SUPFAM" id="SSF69742">
    <property type="entry name" value="Glutamyl tRNA-reductase catalytic, N-terminal domain"/>
    <property type="match status" value="1"/>
</dbReference>
<dbReference type="SUPFAM" id="SSF69075">
    <property type="entry name" value="Glutamyl tRNA-reductase dimerization domain"/>
    <property type="match status" value="1"/>
</dbReference>
<dbReference type="SUPFAM" id="SSF51735">
    <property type="entry name" value="NAD(P)-binding Rossmann-fold domains"/>
    <property type="match status" value="1"/>
</dbReference>
<dbReference type="PROSITE" id="PS00747">
    <property type="entry name" value="GLUTR"/>
    <property type="match status" value="1"/>
</dbReference>
<proteinExistence type="inferred from homology"/>
<name>HEM1_MARN8</name>
<gene>
    <name evidence="1" type="primary">hemA</name>
    <name type="ordered locus">Maqu_2361</name>
</gene>
<reference key="1">
    <citation type="journal article" date="2011" name="Appl. Environ. Microbiol.">
        <title>Genomic potential of Marinobacter aquaeolei, a biogeochemical 'opportunitroph'.</title>
        <authorList>
            <person name="Singer E."/>
            <person name="Webb E.A."/>
            <person name="Nelson W.C."/>
            <person name="Heidelberg J.F."/>
            <person name="Ivanova N."/>
            <person name="Pati A."/>
            <person name="Edwards K.J."/>
        </authorList>
    </citation>
    <scope>NUCLEOTIDE SEQUENCE [LARGE SCALE GENOMIC DNA]</scope>
    <source>
        <strain>ATCC 700491 / DSM 11845 / VT8</strain>
    </source>
</reference>
<keyword id="KW-0521">NADP</keyword>
<keyword id="KW-0560">Oxidoreductase</keyword>
<keyword id="KW-0627">Porphyrin biosynthesis</keyword>
<accession>A1U368</accession>
<protein>
    <recommendedName>
        <fullName evidence="1">Glutamyl-tRNA reductase</fullName>
        <shortName evidence="1">GluTR</shortName>
        <ecNumber evidence="1">1.2.1.70</ecNumber>
    </recommendedName>
</protein>
<organism>
    <name type="scientific">Marinobacter nauticus (strain ATCC 700491 / DSM 11845 / VT8)</name>
    <name type="common">Marinobacter aquaeolei</name>
    <dbReference type="NCBI Taxonomy" id="351348"/>
    <lineage>
        <taxon>Bacteria</taxon>
        <taxon>Pseudomonadati</taxon>
        <taxon>Pseudomonadota</taxon>
        <taxon>Gammaproteobacteria</taxon>
        <taxon>Pseudomonadales</taxon>
        <taxon>Marinobacteraceae</taxon>
        <taxon>Marinobacter</taxon>
    </lineage>
</organism>
<sequence>MALVTLGINHRTAPVEIRERVAFTPERMAEAFSELRAASGASEAAILSTCNRTELYLAGDDDCAPSVLRWLAGFHELDVADLENVLYVHRDSDAVRHMMRVAAGLDSMVLGEPQILGQLKDAYALAREHSATGSFLSRLFEQTFSVAKRVRTQTAIGENPVSVAYASVSMAHHIFADMSRNKALLIGAGKTIELVARHLAEAGVRSFLVANRTLEKAQALAEAHGGKGILLSEIPDHLSDVDIVISSTASPLPILGKGAVERALKKRKHRPYFMVDIAVPRDIEPEVASLADVYLYTVDDLRQVIEENIRSREGAAREAENLISSGVQDFLDQLRALDAVSTLKVFRQRAELLRDVETEKALRALRNGTDPETALRSLARGLTNKLLHQPSVQVRKAMAEGRTEVTECLRELYQLDALEADEPTTTEKL</sequence>
<evidence type="ECO:0000255" key="1">
    <source>
        <dbReference type="HAMAP-Rule" id="MF_00087"/>
    </source>
</evidence>